<gene>
    <name type="primary">SPG4</name>
    <name type="ORF">Kpol_297p13</name>
</gene>
<comment type="function">
    <text evidence="1">Stationary phase-essential protein not required for growth on nonfermentable carbon sources.</text>
</comment>
<comment type="similarity">
    <text evidence="3">Belongs to the SPG4 family.</text>
</comment>
<organism>
    <name type="scientific">Vanderwaltozyma polyspora (strain ATCC 22028 / DSM 70294 / BCRC 21397 / CBS 2163 / NBRC 10782 / NRRL Y-8283 / UCD 57-17)</name>
    <name type="common">Kluyveromyces polysporus</name>
    <dbReference type="NCBI Taxonomy" id="436907"/>
    <lineage>
        <taxon>Eukaryota</taxon>
        <taxon>Fungi</taxon>
        <taxon>Dikarya</taxon>
        <taxon>Ascomycota</taxon>
        <taxon>Saccharomycotina</taxon>
        <taxon>Saccharomycetes</taxon>
        <taxon>Saccharomycetales</taxon>
        <taxon>Saccharomycetaceae</taxon>
        <taxon>Vanderwaltozyma</taxon>
    </lineage>
</organism>
<keyword id="KW-1185">Reference proteome</keyword>
<sequence length="109" mass="12567">MSNFWNAFSVYNKDKHSANSKIYGSNHMNLSTGTTTYLHSNEYREPTSKDVKDGNEMEKQRRMSESSLDSSKRRVSQSTIDDISKLSQGEFKEIYQSLRKGEPSNKVNF</sequence>
<feature type="chain" id="PRO_0000405007" description="Stationary phase protein 4">
    <location>
        <begin position="1"/>
        <end position="109"/>
    </location>
</feature>
<feature type="region of interest" description="Disordered" evidence="2">
    <location>
        <begin position="37"/>
        <end position="81"/>
    </location>
</feature>
<feature type="compositionally biased region" description="Basic and acidic residues" evidence="2">
    <location>
        <begin position="41"/>
        <end position="64"/>
    </location>
</feature>
<proteinExistence type="inferred from homology"/>
<evidence type="ECO:0000250" key="1"/>
<evidence type="ECO:0000256" key="2">
    <source>
        <dbReference type="SAM" id="MobiDB-lite"/>
    </source>
</evidence>
<evidence type="ECO:0000305" key="3"/>
<accession>A7TSL7</accession>
<dbReference type="EMBL" id="DS480515">
    <property type="protein sequence ID" value="EDO14752.1"/>
    <property type="molecule type" value="Genomic_DNA"/>
</dbReference>
<dbReference type="RefSeq" id="XP_001642610.1">
    <property type="nucleotide sequence ID" value="XM_001642560.1"/>
</dbReference>
<dbReference type="SMR" id="A7TSL7"/>
<dbReference type="FunCoup" id="A7TSL7">
    <property type="interactions" value="48"/>
</dbReference>
<dbReference type="GeneID" id="5542769"/>
<dbReference type="KEGG" id="vpo:Kpol_297p13"/>
<dbReference type="eggNOG" id="ENOG502S7JY">
    <property type="taxonomic scope" value="Eukaryota"/>
</dbReference>
<dbReference type="HOGENOM" id="CLU_2158879_0_0_1"/>
<dbReference type="InParanoid" id="A7TSL7"/>
<dbReference type="OMA" id="AHEYREP"/>
<dbReference type="OrthoDB" id="4067991at2759"/>
<dbReference type="PhylomeDB" id="A7TSL7"/>
<dbReference type="Proteomes" id="UP000000267">
    <property type="component" value="Unassembled WGS sequence"/>
</dbReference>
<dbReference type="InterPro" id="IPR020485">
    <property type="entry name" value="Spg4"/>
</dbReference>
<dbReference type="Pfam" id="PF17325">
    <property type="entry name" value="SPG4"/>
    <property type="match status" value="1"/>
</dbReference>
<name>SPG4_VANPO</name>
<protein>
    <recommendedName>
        <fullName>Stationary phase protein 4</fullName>
    </recommendedName>
</protein>
<reference key="1">
    <citation type="journal article" date="2007" name="Proc. Natl. Acad. Sci. U.S.A.">
        <title>Independent sorting-out of thousands of duplicated gene pairs in two yeast species descended from a whole-genome duplication.</title>
        <authorList>
            <person name="Scannell D.R."/>
            <person name="Frank A.C."/>
            <person name="Conant G.C."/>
            <person name="Byrne K.P."/>
            <person name="Woolfit M."/>
            <person name="Wolfe K.H."/>
        </authorList>
    </citation>
    <scope>NUCLEOTIDE SEQUENCE [LARGE SCALE GENOMIC DNA]</scope>
    <source>
        <strain>ATCC 22028 / DSM 70294 / BCRC 21397 / CBS 2163 / NBRC 10782 / NRRL Y-8283 / UCD 57-17</strain>
    </source>
</reference>